<proteinExistence type="evidence at transcript level"/>
<comment type="function">
    <text>IGF-binding proteins prolong the half-life of the IGFs and have been shown to either inhibit or stimulate the growth promoting effects of the IGFs on cell culture. They alter the interaction of IGFs with their cell surface receptors.</text>
</comment>
<comment type="subunit">
    <text evidence="1">Binds IGF2 more than IGF1.</text>
</comment>
<comment type="subcellular location">
    <subcellularLocation>
        <location>Secreted</location>
    </subcellularLocation>
</comment>
<keyword id="KW-1015">Disulfide bond</keyword>
<keyword id="KW-0325">Glycoprotein</keyword>
<keyword id="KW-0340">Growth factor binding</keyword>
<keyword id="KW-0597">Phosphoprotein</keyword>
<keyword id="KW-1185">Reference proteome</keyword>
<keyword id="KW-0964">Secreted</keyword>
<keyword id="KW-0732">Signal</keyword>
<protein>
    <recommendedName>
        <fullName>Insulin-like growth factor-binding protein 4</fullName>
        <shortName>IBP-4</shortName>
        <shortName>IGF-binding protein 4</shortName>
        <shortName>IGFBP-4</shortName>
    </recommendedName>
</protein>
<dbReference type="EMBL" id="S52770">
    <property type="protein sequence ID" value="AAB24873.1"/>
    <property type="molecule type" value="mRNA"/>
</dbReference>
<dbReference type="EMBL" id="BC140688">
    <property type="protein sequence ID" value="AAI40689.1"/>
    <property type="molecule type" value="mRNA"/>
</dbReference>
<dbReference type="PIR" id="A45403">
    <property type="entry name" value="A45403"/>
</dbReference>
<dbReference type="RefSeq" id="NP_776982.1">
    <property type="nucleotide sequence ID" value="NM_174557.4"/>
</dbReference>
<dbReference type="SMR" id="Q05716"/>
<dbReference type="FunCoup" id="Q05716">
    <property type="interactions" value="227"/>
</dbReference>
<dbReference type="STRING" id="9913.ENSBTAP00000063176"/>
<dbReference type="MEROPS" id="I31.952"/>
<dbReference type="GlyCosmos" id="Q05716">
    <property type="glycosylation" value="1 site, No reported glycans"/>
</dbReference>
<dbReference type="GlyGen" id="Q05716">
    <property type="glycosylation" value="1 site"/>
</dbReference>
<dbReference type="PaxDb" id="9913-ENSBTAP00000011361"/>
<dbReference type="Ensembl" id="ENSBTAT00000011361.5">
    <property type="protein sequence ID" value="ENSBTAP00000011361.4"/>
    <property type="gene ID" value="ENSBTAG00000008611.6"/>
</dbReference>
<dbReference type="GeneID" id="282262"/>
<dbReference type="KEGG" id="bta:282262"/>
<dbReference type="CTD" id="3487"/>
<dbReference type="VEuPathDB" id="HostDB:ENSBTAG00000008611"/>
<dbReference type="VGNC" id="VGNC:30086">
    <property type="gene designation" value="IGFBP4"/>
</dbReference>
<dbReference type="eggNOG" id="ENOG502QTC8">
    <property type="taxonomic scope" value="Eukaryota"/>
</dbReference>
<dbReference type="GeneTree" id="ENSGT00940000159647"/>
<dbReference type="HOGENOM" id="CLU_070833_3_0_1"/>
<dbReference type="InParanoid" id="Q05716"/>
<dbReference type="OMA" id="QEPGCGC"/>
<dbReference type="OrthoDB" id="8477465at2759"/>
<dbReference type="TreeFam" id="TF331211"/>
<dbReference type="Reactome" id="R-BTA-381426">
    <property type="pathway name" value="Regulation of Insulin-like Growth Factor (IGF) transport and uptake by Insulin-like Growth Factor Binding Proteins (IGFBPs)"/>
</dbReference>
<dbReference type="Reactome" id="R-BTA-8957275">
    <property type="pathway name" value="Post-translational protein phosphorylation"/>
</dbReference>
<dbReference type="Proteomes" id="UP000009136">
    <property type="component" value="Chromosome 19"/>
</dbReference>
<dbReference type="Bgee" id="ENSBTAG00000008611">
    <property type="expression patterns" value="Expressed in diaphragm and 104 other cell types or tissues"/>
</dbReference>
<dbReference type="GO" id="GO:0005615">
    <property type="term" value="C:extracellular space"/>
    <property type="evidence" value="ECO:0000318"/>
    <property type="project" value="GO_Central"/>
</dbReference>
<dbReference type="GO" id="GO:0031994">
    <property type="term" value="F:insulin-like growth factor I binding"/>
    <property type="evidence" value="ECO:0000318"/>
    <property type="project" value="GO_Central"/>
</dbReference>
<dbReference type="GO" id="GO:0031995">
    <property type="term" value="F:insulin-like growth factor II binding"/>
    <property type="evidence" value="ECO:0000318"/>
    <property type="project" value="GO_Central"/>
</dbReference>
<dbReference type="GO" id="GO:0000165">
    <property type="term" value="P:MAPK cascade"/>
    <property type="evidence" value="ECO:0007669"/>
    <property type="project" value="Ensembl"/>
</dbReference>
<dbReference type="GO" id="GO:0043568">
    <property type="term" value="P:positive regulation of insulin-like growth factor receptor signaling pathway"/>
    <property type="evidence" value="ECO:0007669"/>
    <property type="project" value="Ensembl"/>
</dbReference>
<dbReference type="GO" id="GO:0043410">
    <property type="term" value="P:positive regulation of MAPK cascade"/>
    <property type="evidence" value="ECO:0007669"/>
    <property type="project" value="Ensembl"/>
</dbReference>
<dbReference type="GO" id="GO:0001558">
    <property type="term" value="P:regulation of cell growth"/>
    <property type="evidence" value="ECO:0007669"/>
    <property type="project" value="Ensembl"/>
</dbReference>
<dbReference type="GO" id="GO:0010906">
    <property type="term" value="P:regulation of glucose metabolic process"/>
    <property type="evidence" value="ECO:0007669"/>
    <property type="project" value="Ensembl"/>
</dbReference>
<dbReference type="GO" id="GO:0043567">
    <property type="term" value="P:regulation of insulin-like growth factor receptor signaling pathway"/>
    <property type="evidence" value="ECO:0000318"/>
    <property type="project" value="GO_Central"/>
</dbReference>
<dbReference type="GO" id="GO:0044342">
    <property type="term" value="P:type B pancreatic cell proliferation"/>
    <property type="evidence" value="ECO:0007669"/>
    <property type="project" value="Ensembl"/>
</dbReference>
<dbReference type="CDD" id="cd00191">
    <property type="entry name" value="TY"/>
    <property type="match status" value="1"/>
</dbReference>
<dbReference type="FunFam" id="4.10.40.20:FF:000001">
    <property type="entry name" value="Insulin-like growth factor binding protein 5"/>
    <property type="match status" value="1"/>
</dbReference>
<dbReference type="FunFam" id="4.10.800.10:FF:000002">
    <property type="entry name" value="Insulin-like growth factor-binding protein 2"/>
    <property type="match status" value="1"/>
</dbReference>
<dbReference type="Gene3D" id="4.10.40.20">
    <property type="match status" value="1"/>
</dbReference>
<dbReference type="Gene3D" id="4.10.800.10">
    <property type="entry name" value="Thyroglobulin type-1"/>
    <property type="match status" value="1"/>
</dbReference>
<dbReference type="InterPro" id="IPR009030">
    <property type="entry name" value="Growth_fac_rcpt_cys_sf"/>
</dbReference>
<dbReference type="InterPro" id="IPR022327">
    <property type="entry name" value="IGFBP-4"/>
</dbReference>
<dbReference type="InterPro" id="IPR000867">
    <property type="entry name" value="IGFBP-like"/>
</dbReference>
<dbReference type="InterPro" id="IPR022321">
    <property type="entry name" value="IGFBP_1-6_chordata"/>
</dbReference>
<dbReference type="InterPro" id="IPR017891">
    <property type="entry name" value="Insulin_GF-bd_Cys-rich_CS"/>
</dbReference>
<dbReference type="InterPro" id="IPR000716">
    <property type="entry name" value="Thyroglobulin_1"/>
</dbReference>
<dbReference type="InterPro" id="IPR036857">
    <property type="entry name" value="Thyroglobulin_1_sf"/>
</dbReference>
<dbReference type="PANTHER" id="PTHR11551">
    <property type="entry name" value="INSULIN-LIKE GROWTH FACTOR BINDING PROTEIN"/>
    <property type="match status" value="1"/>
</dbReference>
<dbReference type="PANTHER" id="PTHR11551:SF7">
    <property type="entry name" value="INSULIN-LIKE GROWTH FACTOR-BINDING PROTEIN 4"/>
    <property type="match status" value="1"/>
</dbReference>
<dbReference type="Pfam" id="PF00219">
    <property type="entry name" value="IGFBP"/>
    <property type="match status" value="1"/>
</dbReference>
<dbReference type="Pfam" id="PF00086">
    <property type="entry name" value="Thyroglobulin_1"/>
    <property type="match status" value="1"/>
</dbReference>
<dbReference type="PRINTS" id="PR01976">
    <property type="entry name" value="IGFBPFAMILY"/>
</dbReference>
<dbReference type="PRINTS" id="PR01980">
    <property type="entry name" value="IGFBPFAMILY4"/>
</dbReference>
<dbReference type="SMART" id="SM00121">
    <property type="entry name" value="IB"/>
    <property type="match status" value="1"/>
</dbReference>
<dbReference type="SMART" id="SM00211">
    <property type="entry name" value="TY"/>
    <property type="match status" value="1"/>
</dbReference>
<dbReference type="SUPFAM" id="SSF57184">
    <property type="entry name" value="Growth factor receptor domain"/>
    <property type="match status" value="1"/>
</dbReference>
<dbReference type="SUPFAM" id="SSF57610">
    <property type="entry name" value="Thyroglobulin type-1 domain"/>
    <property type="match status" value="1"/>
</dbReference>
<dbReference type="PROSITE" id="PS00222">
    <property type="entry name" value="IGFBP_N_1"/>
    <property type="match status" value="1"/>
</dbReference>
<dbReference type="PROSITE" id="PS51323">
    <property type="entry name" value="IGFBP_N_2"/>
    <property type="match status" value="1"/>
</dbReference>
<dbReference type="PROSITE" id="PS00484">
    <property type="entry name" value="THYROGLOBULIN_1_1"/>
    <property type="match status" value="1"/>
</dbReference>
<dbReference type="PROSITE" id="PS51162">
    <property type="entry name" value="THYROGLOBULIN_1_2"/>
    <property type="match status" value="1"/>
</dbReference>
<reference key="1">
    <citation type="journal article" date="1992" name="Mol. Endocrinol.">
        <title>Endothelial cells express insulin-like growth factor-binding proteins 2 to 6.</title>
        <authorList>
            <person name="Moser D.R."/>
            <person name="Lowe W.L. Jr."/>
            <person name="Dake B.L."/>
            <person name="Booth B.A."/>
            <person name="Boes M."/>
            <person name="Clemmons D.R."/>
            <person name="Bar R.S."/>
        </authorList>
    </citation>
    <scope>NUCLEOTIDE SEQUENCE [MRNA]</scope>
</reference>
<reference key="2">
    <citation type="submission" date="2007-04" db="EMBL/GenBank/DDBJ databases">
        <authorList>
            <consortium name="NIH - Mammalian Gene Collection (MGC) project"/>
        </authorList>
    </citation>
    <scope>NUCLEOTIDE SEQUENCE [LARGE SCALE MRNA]</scope>
    <source>
        <strain>Hereford</strain>
        <tissue>Fetal lung</tissue>
    </source>
</reference>
<sequence>MLSLCLMAALLLAAGPGPSLGDEAIHCPPCSEEKLARCRPPVGCEELVREPGCGCCATCALGKGMPCGVYTPRCGSGLRCYPPRGVEKPLHTLVHGQGVCMELAEIEAIQESLQPSDKDEGDHPNNSFSPCSAHDRKCLQKHLAKIRDRSTSGGKMKVIGAPREEARPVPQGSCQSELHRALERLAASQSRTHEDLYIIPIPNCDRNGNFHPKQCHPALDGQRGKCWCVDRKTGVKLPGGLEPKGELDCHQLADSFRE</sequence>
<name>IBP4_BOVIN</name>
<evidence type="ECO:0000250" key="1"/>
<evidence type="ECO:0000250" key="2">
    <source>
        <dbReference type="UniProtKB" id="P22692"/>
    </source>
</evidence>
<evidence type="ECO:0000255" key="3"/>
<evidence type="ECO:0000255" key="4">
    <source>
        <dbReference type="PROSITE-ProRule" id="PRU00500"/>
    </source>
</evidence>
<evidence type="ECO:0000255" key="5">
    <source>
        <dbReference type="PROSITE-ProRule" id="PRU00653"/>
    </source>
</evidence>
<gene>
    <name type="primary">IGFBP4</name>
</gene>
<organism>
    <name type="scientific">Bos taurus</name>
    <name type="common">Bovine</name>
    <dbReference type="NCBI Taxonomy" id="9913"/>
    <lineage>
        <taxon>Eukaryota</taxon>
        <taxon>Metazoa</taxon>
        <taxon>Chordata</taxon>
        <taxon>Craniata</taxon>
        <taxon>Vertebrata</taxon>
        <taxon>Euteleostomi</taxon>
        <taxon>Mammalia</taxon>
        <taxon>Eutheria</taxon>
        <taxon>Laurasiatheria</taxon>
        <taxon>Artiodactyla</taxon>
        <taxon>Ruminantia</taxon>
        <taxon>Pecora</taxon>
        <taxon>Bovidae</taxon>
        <taxon>Bovinae</taxon>
        <taxon>Bos</taxon>
    </lineage>
</organism>
<accession>Q05716</accession>
<accession>A5D7U8</accession>
<feature type="signal peptide" evidence="1">
    <location>
        <begin position="1"/>
        <end position="21"/>
    </location>
</feature>
<feature type="chain" id="PRO_0000014381" description="Insulin-like growth factor-binding protein 4">
    <location>
        <begin position="22"/>
        <end position="258"/>
    </location>
</feature>
<feature type="domain" description="IGFBP N-terminal" evidence="5">
    <location>
        <begin position="23"/>
        <end position="103"/>
    </location>
</feature>
<feature type="domain" description="Thyroglobulin type-1" evidence="4">
    <location>
        <begin position="171"/>
        <end position="249"/>
    </location>
</feature>
<feature type="modified residue" description="Phosphoserine" evidence="2">
    <location>
        <position position="255"/>
    </location>
</feature>
<feature type="glycosylation site" description="N-linked (GlcNAc...) asparagine" evidence="3">
    <location>
        <position position="125"/>
    </location>
</feature>
<feature type="disulfide bond" evidence="5">
    <location>
        <begin position="27"/>
        <end position="53"/>
    </location>
</feature>
<feature type="disulfide bond" evidence="5">
    <location>
        <begin position="30"/>
        <end position="55"/>
    </location>
</feature>
<feature type="disulfide bond" evidence="5">
    <location>
        <begin position="38"/>
        <end position="56"/>
    </location>
</feature>
<feature type="disulfide bond" evidence="5">
    <location>
        <begin position="44"/>
        <end position="59"/>
    </location>
</feature>
<feature type="disulfide bond" evidence="5">
    <location>
        <begin position="67"/>
        <end position="80"/>
    </location>
</feature>
<feature type="disulfide bond" evidence="5">
    <location>
        <begin position="74"/>
        <end position="100"/>
    </location>
</feature>
<feature type="disulfide bond" evidence="4">
    <location>
        <begin position="131"/>
        <end position="138"/>
    </location>
</feature>
<feature type="disulfide bond" evidence="4">
    <location>
        <begin position="174"/>
        <end position="204"/>
    </location>
</feature>
<feature type="disulfide bond" evidence="4">
    <location>
        <begin position="215"/>
        <end position="226"/>
    </location>
</feature>
<feature type="disulfide bond" evidence="4">
    <location>
        <begin position="228"/>
        <end position="249"/>
    </location>
</feature>